<comment type="function">
    <text evidence="1">Catalyzes the pyrimidine ring opening between N-3 and C-4 by an unusual flavin hydroperoxide-catalyzed mechanism, adding oxygen atoms in the process to yield ureidoacrylate peracid, that immediately reacts with FMN forming ureidoacrylate and FMN-N(5)-oxide. The FMN-N(5)-oxide reacts spontaneously with NADH to produce FMN. Requires the flavin reductase RutF to regenerate FMN in vivo.</text>
</comment>
<comment type="catalytic activity">
    <reaction evidence="1">
        <text>uracil + FMNH2 + NADH + O2 = (Z)-3-ureidoacrylate + FMN + NAD(+) + H2O + H(+)</text>
        <dbReference type="Rhea" id="RHEA:31587"/>
        <dbReference type="ChEBI" id="CHEBI:15377"/>
        <dbReference type="ChEBI" id="CHEBI:15378"/>
        <dbReference type="ChEBI" id="CHEBI:15379"/>
        <dbReference type="ChEBI" id="CHEBI:17568"/>
        <dbReference type="ChEBI" id="CHEBI:57540"/>
        <dbReference type="ChEBI" id="CHEBI:57618"/>
        <dbReference type="ChEBI" id="CHEBI:57945"/>
        <dbReference type="ChEBI" id="CHEBI:58210"/>
        <dbReference type="ChEBI" id="CHEBI:59891"/>
        <dbReference type="EC" id="1.14.99.46"/>
    </reaction>
</comment>
<comment type="catalytic activity">
    <reaction evidence="1">
        <text>thymine + FMNH2 + NADH + O2 = (Z)-2-methylureidoacrylate + FMN + NAD(+) + H2O + H(+)</text>
        <dbReference type="Rhea" id="RHEA:31599"/>
        <dbReference type="ChEBI" id="CHEBI:15377"/>
        <dbReference type="ChEBI" id="CHEBI:15378"/>
        <dbReference type="ChEBI" id="CHEBI:15379"/>
        <dbReference type="ChEBI" id="CHEBI:17821"/>
        <dbReference type="ChEBI" id="CHEBI:57540"/>
        <dbReference type="ChEBI" id="CHEBI:57618"/>
        <dbReference type="ChEBI" id="CHEBI:57945"/>
        <dbReference type="ChEBI" id="CHEBI:58210"/>
        <dbReference type="ChEBI" id="CHEBI:143783"/>
        <dbReference type="EC" id="1.14.99.46"/>
    </reaction>
</comment>
<comment type="similarity">
    <text evidence="1">Belongs to the NtaA/SnaA/DszA monooxygenase family. RutA subfamily.</text>
</comment>
<protein>
    <recommendedName>
        <fullName evidence="1">Pyrimidine monooxygenase RutA</fullName>
        <ecNumber evidence="1">1.14.99.46</ecNumber>
    </recommendedName>
</protein>
<dbReference type="EC" id="1.14.99.46" evidence="1"/>
<dbReference type="EMBL" id="CP001918">
    <property type="protein sequence ID" value="ADF62165.1"/>
    <property type="molecule type" value="Genomic_DNA"/>
</dbReference>
<dbReference type="RefSeq" id="WP_013097193.1">
    <property type="nucleotide sequence ID" value="NC_014121.1"/>
</dbReference>
<dbReference type="RefSeq" id="YP_003613114.1">
    <property type="nucleotide sequence ID" value="NC_014121.1"/>
</dbReference>
<dbReference type="SMR" id="D5CE32"/>
<dbReference type="STRING" id="716541.ECL_02622"/>
<dbReference type="EnsemblBacteria" id="ADF62165">
    <property type="protein sequence ID" value="ADF62165"/>
    <property type="gene ID" value="ECL_02622"/>
</dbReference>
<dbReference type="KEGG" id="enc:ECL_02622"/>
<dbReference type="PATRIC" id="fig|716541.4.peg.2795"/>
<dbReference type="eggNOG" id="COG2141">
    <property type="taxonomic scope" value="Bacteria"/>
</dbReference>
<dbReference type="HOGENOM" id="CLU_027853_1_1_6"/>
<dbReference type="OrthoDB" id="9814695at2"/>
<dbReference type="Proteomes" id="UP000002363">
    <property type="component" value="Chromosome"/>
</dbReference>
<dbReference type="GO" id="GO:0008726">
    <property type="term" value="F:alkanesulfonate monooxygenase activity"/>
    <property type="evidence" value="ECO:0007669"/>
    <property type="project" value="TreeGrafter"/>
</dbReference>
<dbReference type="GO" id="GO:0052614">
    <property type="term" value="F:uracil oxygenase activity"/>
    <property type="evidence" value="ECO:0007669"/>
    <property type="project" value="UniProtKB-EC"/>
</dbReference>
<dbReference type="GO" id="GO:0046306">
    <property type="term" value="P:alkanesulfonate catabolic process"/>
    <property type="evidence" value="ECO:0007669"/>
    <property type="project" value="TreeGrafter"/>
</dbReference>
<dbReference type="GO" id="GO:0019740">
    <property type="term" value="P:nitrogen utilization"/>
    <property type="evidence" value="ECO:0007669"/>
    <property type="project" value="UniProtKB-UniRule"/>
</dbReference>
<dbReference type="GO" id="GO:0006212">
    <property type="term" value="P:uracil catabolic process"/>
    <property type="evidence" value="ECO:0007669"/>
    <property type="project" value="UniProtKB-UniRule"/>
</dbReference>
<dbReference type="CDD" id="cd01094">
    <property type="entry name" value="Alkanesulfonate_monoxygenase"/>
    <property type="match status" value="1"/>
</dbReference>
<dbReference type="FunFam" id="3.20.20.30:FF:000003">
    <property type="entry name" value="Pyrimidine monooxygenase RutA"/>
    <property type="match status" value="1"/>
</dbReference>
<dbReference type="Gene3D" id="3.20.20.30">
    <property type="entry name" value="Luciferase-like domain"/>
    <property type="match status" value="1"/>
</dbReference>
<dbReference type="HAMAP" id="MF_01699">
    <property type="entry name" value="RutA"/>
    <property type="match status" value="1"/>
</dbReference>
<dbReference type="InterPro" id="IPR011251">
    <property type="entry name" value="Luciferase-like_dom"/>
</dbReference>
<dbReference type="InterPro" id="IPR036661">
    <property type="entry name" value="Luciferase-like_sf"/>
</dbReference>
<dbReference type="InterPro" id="IPR019914">
    <property type="entry name" value="Pyrimidine_monooxygenase_RutA"/>
</dbReference>
<dbReference type="InterPro" id="IPR050172">
    <property type="entry name" value="SsuD_RutA_monooxygenase"/>
</dbReference>
<dbReference type="NCBIfam" id="TIGR03612">
    <property type="entry name" value="RutA"/>
    <property type="match status" value="1"/>
</dbReference>
<dbReference type="PANTHER" id="PTHR42847">
    <property type="entry name" value="ALKANESULFONATE MONOOXYGENASE"/>
    <property type="match status" value="1"/>
</dbReference>
<dbReference type="PANTHER" id="PTHR42847:SF4">
    <property type="entry name" value="ALKANESULFONATE MONOOXYGENASE-RELATED"/>
    <property type="match status" value="1"/>
</dbReference>
<dbReference type="Pfam" id="PF00296">
    <property type="entry name" value="Bac_luciferase"/>
    <property type="match status" value="1"/>
</dbReference>
<dbReference type="SUPFAM" id="SSF51679">
    <property type="entry name" value="Bacterial luciferase-like"/>
    <property type="match status" value="1"/>
</dbReference>
<name>RUTA_ENTCC</name>
<sequence>MKIGVFVPIGNNGWLISTTAPQYMPTFELNKAIVQKAEHYHFDFALSMIKLRGFGGKTEFWDHNLESFTLMAGLAAVTSRIQIYATAATLTLPPAIVARMASTIDSISGGRFGVNLVTGWQKPEYDQMGLWPGDEYFSRRYEYLTEYVQVLRDLWGTGKSDFKGDYFTMNDCRVSPQPSAPMKVICAGQSDAGMAFSAKYADFNFCFGKGVNTPAAFAPTAARMKEAADKTGRDVGSYVLFMVIADETDEAARAKWERYKDGADDEALSWLTEQSQKDTRSGADTNVRQMADPTSAVNINMGTLVGSYASVARMLDEVAAVPGAEGVLLTFDDFLTGVETFGERIQPLMQCRAHIPAITKEVA</sequence>
<proteinExistence type="inferred from homology"/>
<evidence type="ECO:0000255" key="1">
    <source>
        <dbReference type="HAMAP-Rule" id="MF_01699"/>
    </source>
</evidence>
<gene>
    <name evidence="1" type="primary">rutA</name>
    <name type="ordered locus">ECL_02622</name>
</gene>
<organism>
    <name type="scientific">Enterobacter cloacae subsp. cloacae (strain ATCC 13047 / DSM 30054 / NBRC 13535 / NCTC 10005 / WDCM 00083 / NCDC 279-56)</name>
    <dbReference type="NCBI Taxonomy" id="716541"/>
    <lineage>
        <taxon>Bacteria</taxon>
        <taxon>Pseudomonadati</taxon>
        <taxon>Pseudomonadota</taxon>
        <taxon>Gammaproteobacteria</taxon>
        <taxon>Enterobacterales</taxon>
        <taxon>Enterobacteriaceae</taxon>
        <taxon>Enterobacter</taxon>
        <taxon>Enterobacter cloacae complex</taxon>
    </lineage>
</organism>
<reference key="1">
    <citation type="journal article" date="2010" name="J. Bacteriol.">
        <title>Complete genome sequence of Enterobacter cloacae subsp. cloacae type strain ATCC 13047.</title>
        <authorList>
            <person name="Ren Y."/>
            <person name="Ren Y."/>
            <person name="Zhou Z."/>
            <person name="Guo X."/>
            <person name="Li Y."/>
            <person name="Feng L."/>
            <person name="Wang L."/>
        </authorList>
    </citation>
    <scope>NUCLEOTIDE SEQUENCE [LARGE SCALE GENOMIC DNA]</scope>
    <source>
        <strain>ATCC 13047 / DSM 30054 / NBRC 13535 / NCTC 10005 / WDCM 00083 / NCDC 279-56</strain>
    </source>
</reference>
<accession>D5CE32</accession>
<keyword id="KW-0285">Flavoprotein</keyword>
<keyword id="KW-0288">FMN</keyword>
<keyword id="KW-0503">Monooxygenase</keyword>
<keyword id="KW-0521">NADP</keyword>
<keyword id="KW-0560">Oxidoreductase</keyword>
<keyword id="KW-1185">Reference proteome</keyword>
<feature type="chain" id="PRO_0000402590" description="Pyrimidine monooxygenase RutA">
    <location>
        <begin position="1"/>
        <end position="363"/>
    </location>
</feature>
<feature type="binding site" evidence="1">
    <location>
        <begin position="49"/>
        <end position="50"/>
    </location>
    <ligand>
        <name>FMN</name>
        <dbReference type="ChEBI" id="CHEBI:58210"/>
    </ligand>
</feature>
<feature type="binding site" evidence="1">
    <location>
        <position position="115"/>
    </location>
    <ligand>
        <name>FMN</name>
        <dbReference type="ChEBI" id="CHEBI:58210"/>
    </ligand>
</feature>
<feature type="binding site" evidence="1">
    <location>
        <position position="124"/>
    </location>
    <ligand>
        <name>FMN</name>
        <dbReference type="ChEBI" id="CHEBI:58210"/>
    </ligand>
</feature>
<feature type="binding site" evidence="1">
    <location>
        <begin position="140"/>
        <end position="141"/>
    </location>
    <ligand>
        <name>FMN</name>
        <dbReference type="ChEBI" id="CHEBI:58210"/>
    </ligand>
</feature>
<feature type="binding site" evidence="1">
    <location>
        <position position="190"/>
    </location>
    <ligand>
        <name>FMN</name>
        <dbReference type="ChEBI" id="CHEBI:58210"/>
    </ligand>
</feature>